<comment type="function">
    <text evidence="1">Proton-conducting pore forming subunit of the V0 complex of vacuolar(H+)-ATPase (V-ATPase), a multisubunit enzyme composed of a peripheral complex (V1) that hydrolyzes ATP and a membrane integral complex (V0) that translocates protons (By similarity). V-ATPase is responsible for acidifying and maintaining the pH of intracellular compartments (By similarity).</text>
</comment>
<comment type="subunit">
    <text evidence="1">V-ATPase is a heteromultimeric enzyme composed of a peripheral catalytic V1 complex (components A to H) attached to an integral membrane V0 proton pore complex (components: a, c, c', c'', d, e, f and VOA1) (By similarity). The decameric c-ring forms the proton-conducting pore, and is composed of eight proteolipid subunits c, one subunit c' and one subunit c'' (By similarity).</text>
</comment>
<comment type="subcellular location">
    <subcellularLocation>
        <location evidence="1">Vacuole membrane</location>
        <topology evidence="2">Multi-pass membrane protein</topology>
    </subcellularLocation>
</comment>
<comment type="similarity">
    <text evidence="3">Belongs to the V-ATPase proteolipid subunit family.</text>
</comment>
<name>VATL2_CANGA</name>
<protein>
    <recommendedName>
        <fullName evidence="1">V-type proton ATPase subunit c'</fullName>
        <shortName evidence="1">V-ATPase subunit c'</shortName>
    </recommendedName>
    <alternativeName>
        <fullName>Proteolipid protein VMA11</fullName>
    </alternativeName>
    <alternativeName>
        <fullName>V-type proton ATPase 16 kDa proteolipid subunit 2</fullName>
        <shortName>V-ATPase 16 kDa proteolipid subunit 2</shortName>
    </alternativeName>
    <alternativeName>
        <fullName>Vacuolar proton pump 16 kDa proteolipid subunit 2</fullName>
    </alternativeName>
    <alternativeName>
        <fullName evidence="1">Vacuolar proton pump c' subunit</fullName>
    </alternativeName>
</protein>
<gene>
    <name type="primary">VMA11</name>
    <name type="ordered locus">CAGL0E06204g</name>
</gene>
<keyword id="KW-0375">Hydrogen ion transport</keyword>
<keyword id="KW-0406">Ion transport</keyword>
<keyword id="KW-0472">Membrane</keyword>
<keyword id="KW-1185">Reference proteome</keyword>
<keyword id="KW-0812">Transmembrane</keyword>
<keyword id="KW-1133">Transmembrane helix</keyword>
<keyword id="KW-0813">Transport</keyword>
<keyword id="KW-0926">Vacuole</keyword>
<reference key="1">
    <citation type="journal article" date="2004" name="Nature">
        <title>Genome evolution in yeasts.</title>
        <authorList>
            <person name="Dujon B."/>
            <person name="Sherman D."/>
            <person name="Fischer G."/>
            <person name="Durrens P."/>
            <person name="Casaregola S."/>
            <person name="Lafontaine I."/>
            <person name="de Montigny J."/>
            <person name="Marck C."/>
            <person name="Neuveglise C."/>
            <person name="Talla E."/>
            <person name="Goffard N."/>
            <person name="Frangeul L."/>
            <person name="Aigle M."/>
            <person name="Anthouard V."/>
            <person name="Babour A."/>
            <person name="Barbe V."/>
            <person name="Barnay S."/>
            <person name="Blanchin S."/>
            <person name="Beckerich J.-M."/>
            <person name="Beyne E."/>
            <person name="Bleykasten C."/>
            <person name="Boisrame A."/>
            <person name="Boyer J."/>
            <person name="Cattolico L."/>
            <person name="Confanioleri F."/>
            <person name="de Daruvar A."/>
            <person name="Despons L."/>
            <person name="Fabre E."/>
            <person name="Fairhead C."/>
            <person name="Ferry-Dumazet H."/>
            <person name="Groppi A."/>
            <person name="Hantraye F."/>
            <person name="Hennequin C."/>
            <person name="Jauniaux N."/>
            <person name="Joyet P."/>
            <person name="Kachouri R."/>
            <person name="Kerrest A."/>
            <person name="Koszul R."/>
            <person name="Lemaire M."/>
            <person name="Lesur I."/>
            <person name="Ma L."/>
            <person name="Muller H."/>
            <person name="Nicaud J.-M."/>
            <person name="Nikolski M."/>
            <person name="Oztas S."/>
            <person name="Ozier-Kalogeropoulos O."/>
            <person name="Pellenz S."/>
            <person name="Potier S."/>
            <person name="Richard G.-F."/>
            <person name="Straub M.-L."/>
            <person name="Suleau A."/>
            <person name="Swennen D."/>
            <person name="Tekaia F."/>
            <person name="Wesolowski-Louvel M."/>
            <person name="Westhof E."/>
            <person name="Wirth B."/>
            <person name="Zeniou-Meyer M."/>
            <person name="Zivanovic Y."/>
            <person name="Bolotin-Fukuhara M."/>
            <person name="Thierry A."/>
            <person name="Bouchier C."/>
            <person name="Caudron B."/>
            <person name="Scarpelli C."/>
            <person name="Gaillardin C."/>
            <person name="Weissenbach J."/>
            <person name="Wincker P."/>
            <person name="Souciet J.-L."/>
        </authorList>
    </citation>
    <scope>NUCLEOTIDE SEQUENCE [LARGE SCALE GENOMIC DNA]</scope>
    <source>
        <strain>ATCC 2001 / BCRC 20586 / JCM 3761 / NBRC 0622 / NRRL Y-65 / CBS 138</strain>
    </source>
</reference>
<evidence type="ECO:0000250" key="1">
    <source>
        <dbReference type="UniProtKB" id="P32842"/>
    </source>
</evidence>
<evidence type="ECO:0000255" key="2"/>
<evidence type="ECO:0000305" key="3"/>
<dbReference type="EMBL" id="CR380951">
    <property type="protein sequence ID" value="CAG58878.1"/>
    <property type="molecule type" value="Genomic_DNA"/>
</dbReference>
<dbReference type="RefSeq" id="XP_445959.1">
    <property type="nucleotide sequence ID" value="XM_445959.1"/>
</dbReference>
<dbReference type="SMR" id="Q6FUY5"/>
<dbReference type="FunCoup" id="Q6FUY5">
    <property type="interactions" value="183"/>
</dbReference>
<dbReference type="STRING" id="284593.Q6FUY5"/>
<dbReference type="EnsemblFungi" id="CAGL0E06204g-T">
    <property type="protein sequence ID" value="CAGL0E06204g-T-p1"/>
    <property type="gene ID" value="CAGL0E06204g"/>
</dbReference>
<dbReference type="KEGG" id="cgr:2887351"/>
<dbReference type="CGD" id="CAL0128810">
    <property type="gene designation" value="CAGL0E06204g"/>
</dbReference>
<dbReference type="VEuPathDB" id="FungiDB:B1J91_E06204g"/>
<dbReference type="VEuPathDB" id="FungiDB:CAGL0E06204g"/>
<dbReference type="eggNOG" id="KOG0232">
    <property type="taxonomic scope" value="Eukaryota"/>
</dbReference>
<dbReference type="HOGENOM" id="CLU_085752_1_1_1"/>
<dbReference type="InParanoid" id="Q6FUY5"/>
<dbReference type="OMA" id="MSVCPPY"/>
<dbReference type="Proteomes" id="UP000002428">
    <property type="component" value="Chromosome E"/>
</dbReference>
<dbReference type="GO" id="GO:0000324">
    <property type="term" value="C:fungal-type vacuole"/>
    <property type="evidence" value="ECO:0007669"/>
    <property type="project" value="EnsemblFungi"/>
</dbReference>
<dbReference type="GO" id="GO:0000220">
    <property type="term" value="C:vacuolar proton-transporting V-type ATPase, V0 domain"/>
    <property type="evidence" value="ECO:0007669"/>
    <property type="project" value="EnsemblFungi"/>
</dbReference>
<dbReference type="GO" id="GO:0046961">
    <property type="term" value="F:proton-transporting ATPase activity, rotational mechanism"/>
    <property type="evidence" value="ECO:0007669"/>
    <property type="project" value="InterPro"/>
</dbReference>
<dbReference type="CDD" id="cd18175">
    <property type="entry name" value="ATP-synt_Vo_c_ATP6C_rpt1"/>
    <property type="match status" value="1"/>
</dbReference>
<dbReference type="CDD" id="cd18176">
    <property type="entry name" value="ATP-synt_Vo_c_ATP6C_rpt2"/>
    <property type="match status" value="1"/>
</dbReference>
<dbReference type="FunFam" id="1.20.120.610:FF:000003">
    <property type="entry name" value="V-type proton ATPase proteolipid subunit"/>
    <property type="match status" value="1"/>
</dbReference>
<dbReference type="Gene3D" id="1.20.120.610">
    <property type="entry name" value="lithium bound rotor ring of v- atpase"/>
    <property type="match status" value="1"/>
</dbReference>
<dbReference type="InterPro" id="IPR002379">
    <property type="entry name" value="ATPase_proteolipid_c-like_dom"/>
</dbReference>
<dbReference type="InterPro" id="IPR000245">
    <property type="entry name" value="ATPase_proteolipid_csu"/>
</dbReference>
<dbReference type="InterPro" id="IPR011555">
    <property type="entry name" value="ATPase_proteolipid_su_C_euk"/>
</dbReference>
<dbReference type="InterPro" id="IPR035921">
    <property type="entry name" value="F/V-ATP_Csub_sf"/>
</dbReference>
<dbReference type="NCBIfam" id="TIGR01100">
    <property type="entry name" value="V_ATP_synt_C"/>
    <property type="match status" value="1"/>
</dbReference>
<dbReference type="PANTHER" id="PTHR10263">
    <property type="entry name" value="V-TYPE PROTON ATPASE PROTEOLIPID SUBUNIT"/>
    <property type="match status" value="1"/>
</dbReference>
<dbReference type="Pfam" id="PF00137">
    <property type="entry name" value="ATP-synt_C"/>
    <property type="match status" value="2"/>
</dbReference>
<dbReference type="PRINTS" id="PR00122">
    <property type="entry name" value="VACATPASE"/>
</dbReference>
<dbReference type="SUPFAM" id="SSF81333">
    <property type="entry name" value="F1F0 ATP synthase subunit C"/>
    <property type="match status" value="2"/>
</dbReference>
<accession>Q6FUY5</accession>
<sequence>MDMVASDNVYAPLYAPFFGFAGCALAMILSCLGAAIGTAKSGIGIAGIGTFKPELIMKSLIPVVMSGILAIYGLVVAVLIAGNLSPTEEYTLFNGFMHLSCGLCVGFACLSSGYAIGIVGDVGVRKYMHQPRLFVGIVLILIFSEVLGLYGMIIALILNTKGSE</sequence>
<organism>
    <name type="scientific">Candida glabrata (strain ATCC 2001 / BCRC 20586 / JCM 3761 / NBRC 0622 / NRRL Y-65 / CBS 138)</name>
    <name type="common">Yeast</name>
    <name type="synonym">Nakaseomyces glabratus</name>
    <dbReference type="NCBI Taxonomy" id="284593"/>
    <lineage>
        <taxon>Eukaryota</taxon>
        <taxon>Fungi</taxon>
        <taxon>Dikarya</taxon>
        <taxon>Ascomycota</taxon>
        <taxon>Saccharomycotina</taxon>
        <taxon>Saccharomycetes</taxon>
        <taxon>Saccharomycetales</taxon>
        <taxon>Saccharomycetaceae</taxon>
        <taxon>Nakaseomyces</taxon>
    </lineage>
</organism>
<feature type="chain" id="PRO_0000071783" description="V-type proton ATPase subunit c'">
    <location>
        <begin position="1"/>
        <end position="164"/>
    </location>
</feature>
<feature type="topological domain" description="Lumenal" evidence="2">
    <location>
        <begin position="1"/>
        <end position="16"/>
    </location>
</feature>
<feature type="transmembrane region" description="Helical" evidence="2">
    <location>
        <begin position="17"/>
        <end position="37"/>
    </location>
</feature>
<feature type="topological domain" description="Cytoplasmic" evidence="2">
    <location>
        <begin position="38"/>
        <end position="59"/>
    </location>
</feature>
<feature type="transmembrane region" description="Helical" evidence="2">
    <location>
        <begin position="60"/>
        <end position="80"/>
    </location>
</feature>
<feature type="topological domain" description="Lumenal" evidence="2">
    <location>
        <begin position="81"/>
        <end position="98"/>
    </location>
</feature>
<feature type="transmembrane region" description="Helical" evidence="2">
    <location>
        <begin position="99"/>
        <end position="119"/>
    </location>
</feature>
<feature type="topological domain" description="Cytoplasmic" evidence="2">
    <location>
        <begin position="120"/>
        <end position="136"/>
    </location>
</feature>
<feature type="transmembrane region" description="Helical" evidence="2">
    <location>
        <begin position="137"/>
        <end position="157"/>
    </location>
</feature>
<feature type="topological domain" description="Lumenal" evidence="2">
    <location>
        <begin position="158"/>
        <end position="164"/>
    </location>
</feature>
<feature type="site" description="Essential for proton translocation" evidence="1">
    <location>
        <position position="145"/>
    </location>
</feature>
<proteinExistence type="inferred from homology"/>